<reference key="1">
    <citation type="journal article" date="1994" name="Nucleic Acids Res.">
        <title>Analysis of the Escherichia coli genome. V. DNA sequence of the region from 76.0 to 81.5 minutes.</title>
        <authorList>
            <person name="Sofia H.J."/>
            <person name="Burland V."/>
            <person name="Daniels D.L."/>
            <person name="Plunkett G. III"/>
            <person name="Blattner F.R."/>
        </authorList>
    </citation>
    <scope>NUCLEOTIDE SEQUENCE [LARGE SCALE GENOMIC DNA]</scope>
    <source>
        <strain>K12 / MG1655 / ATCC 47076</strain>
    </source>
</reference>
<reference key="2">
    <citation type="journal article" date="1997" name="Science">
        <title>The complete genome sequence of Escherichia coli K-12.</title>
        <authorList>
            <person name="Blattner F.R."/>
            <person name="Plunkett G. III"/>
            <person name="Bloch C.A."/>
            <person name="Perna N.T."/>
            <person name="Burland V."/>
            <person name="Riley M."/>
            <person name="Collado-Vides J."/>
            <person name="Glasner J.D."/>
            <person name="Rode C.K."/>
            <person name="Mayhew G.F."/>
            <person name="Gregor J."/>
            <person name="Davis N.W."/>
            <person name="Kirkpatrick H.A."/>
            <person name="Goeden M.A."/>
            <person name="Rose D.J."/>
            <person name="Mau B."/>
            <person name="Shao Y."/>
        </authorList>
    </citation>
    <scope>NUCLEOTIDE SEQUENCE [LARGE SCALE GENOMIC DNA]</scope>
    <source>
        <strain>K12 / MG1655 / ATCC 47076</strain>
    </source>
</reference>
<reference key="3">
    <citation type="journal article" date="2006" name="Mol. Syst. Biol.">
        <title>Highly accurate genome sequences of Escherichia coli K-12 strains MG1655 and W3110.</title>
        <authorList>
            <person name="Hayashi K."/>
            <person name="Morooka N."/>
            <person name="Yamamoto Y."/>
            <person name="Fujita K."/>
            <person name="Isono K."/>
            <person name="Choi S."/>
            <person name="Ohtsubo E."/>
            <person name="Baba T."/>
            <person name="Wanner B.L."/>
            <person name="Mori H."/>
            <person name="Horiuchi T."/>
        </authorList>
    </citation>
    <scope>NUCLEOTIDE SEQUENCE [LARGE SCALE GENOMIC DNA]</scope>
    <source>
        <strain>K12 / W3110 / ATCC 27325 / DSM 5911</strain>
    </source>
</reference>
<reference key="4">
    <citation type="journal article" date="1993" name="J. Bacteriol.">
        <title>Rhs elements of Escherichia coli K-12: complex composites of shared and unique components that have different evolutionary histories.</title>
        <authorList>
            <person name="Zhao S."/>
            <person name="Sandt C.H."/>
            <person name="Feulner G."/>
            <person name="Vlazny D.A."/>
            <person name="Gray J.A."/>
            <person name="Hill C.W."/>
        </authorList>
    </citation>
    <scope>NUCLEOTIDE SEQUENCE [GENOMIC DNA] OF 225-374</scope>
    <source>
        <strain>K12</strain>
    </source>
</reference>
<reference key="5">
    <citation type="journal article" date="2005" name="Science">
        <title>Global topology analysis of the Escherichia coli inner membrane proteome.</title>
        <authorList>
            <person name="Daley D.O."/>
            <person name="Rapp M."/>
            <person name="Granseth E."/>
            <person name="Melen K."/>
            <person name="Drew D."/>
            <person name="von Heijne G."/>
        </authorList>
    </citation>
    <scope>TOPOLOGY [LARGE SCALE ANALYSIS]</scope>
    <source>
        <strain>K12 / MG1655 / ATCC 47076</strain>
    </source>
</reference>
<accession>P0AGH1</accession>
<accession>P31993</accession>
<accession>P76703</accession>
<accession>Q2M7E8</accession>
<dbReference type="EMBL" id="U00039">
    <property type="protein sequence ID" value="AAB18460.1"/>
    <property type="status" value="ALT_INIT"/>
    <property type="molecule type" value="Genomic_DNA"/>
</dbReference>
<dbReference type="EMBL" id="U00096">
    <property type="protein sequence ID" value="AAC76510.4"/>
    <property type="molecule type" value="Genomic_DNA"/>
</dbReference>
<dbReference type="EMBL" id="AP009048">
    <property type="protein sequence ID" value="BAE77808.1"/>
    <property type="molecule type" value="Genomic_DNA"/>
</dbReference>
<dbReference type="EMBL" id="L02370">
    <property type="protein sequence ID" value="AAC61886.1"/>
    <property type="molecule type" value="Genomic_DNA"/>
</dbReference>
<dbReference type="RefSeq" id="NP_417942.6">
    <property type="nucleotide sequence ID" value="NC_000913.3"/>
</dbReference>
<dbReference type="RefSeq" id="WP_001216257.1">
    <property type="nucleotide sequence ID" value="NZ_SSZK01000042.1"/>
</dbReference>
<dbReference type="SMR" id="P0AGH1"/>
<dbReference type="BioGRID" id="4262513">
    <property type="interactions" value="11"/>
</dbReference>
<dbReference type="FunCoup" id="P0AGH1">
    <property type="interactions" value="87"/>
</dbReference>
<dbReference type="STRING" id="511145.b3485"/>
<dbReference type="TCDB" id="3.A.1.105.16">
    <property type="family name" value="the atp-binding cassette (abc) superfamily"/>
</dbReference>
<dbReference type="PaxDb" id="511145-b3485"/>
<dbReference type="EnsemblBacteria" id="AAC76510">
    <property type="protein sequence ID" value="AAC76510"/>
    <property type="gene ID" value="b3485"/>
</dbReference>
<dbReference type="GeneID" id="947991"/>
<dbReference type="KEGG" id="ecj:JW5677"/>
<dbReference type="KEGG" id="eco:b3485"/>
<dbReference type="KEGG" id="ecoc:C3026_18875"/>
<dbReference type="PATRIC" id="fig|511145.12.peg.3584"/>
<dbReference type="EchoBASE" id="EB1717"/>
<dbReference type="eggNOG" id="COG0842">
    <property type="taxonomic scope" value="Bacteria"/>
</dbReference>
<dbReference type="HOGENOM" id="CLU_039483_8_1_6"/>
<dbReference type="InParanoid" id="P0AGH1"/>
<dbReference type="OMA" id="AVRMRFN"/>
<dbReference type="OrthoDB" id="9808686at2"/>
<dbReference type="PhylomeDB" id="P0AGH1"/>
<dbReference type="BioCyc" id="EcoCyc:YHHJ-MONOMER"/>
<dbReference type="PRO" id="PR:P0AGH1"/>
<dbReference type="Proteomes" id="UP000000625">
    <property type="component" value="Chromosome"/>
</dbReference>
<dbReference type="GO" id="GO:0005886">
    <property type="term" value="C:plasma membrane"/>
    <property type="evidence" value="ECO:0000314"/>
    <property type="project" value="EcoCyc"/>
</dbReference>
<dbReference type="GO" id="GO:0140359">
    <property type="term" value="F:ABC-type transporter activity"/>
    <property type="evidence" value="ECO:0007669"/>
    <property type="project" value="InterPro"/>
</dbReference>
<dbReference type="FunFam" id="3.40.1710.10:FF:000003">
    <property type="entry name" value="ABC transporter permease"/>
    <property type="match status" value="1"/>
</dbReference>
<dbReference type="Gene3D" id="3.40.1710.10">
    <property type="entry name" value="abc type-2 transporter like domain"/>
    <property type="match status" value="1"/>
</dbReference>
<dbReference type="InterPro" id="IPR051449">
    <property type="entry name" value="ABC-2_transporter_component"/>
</dbReference>
<dbReference type="InterPro" id="IPR013525">
    <property type="entry name" value="ABC2_TM"/>
</dbReference>
<dbReference type="InterPro" id="IPR047817">
    <property type="entry name" value="ABC2_TM_bact-type"/>
</dbReference>
<dbReference type="PANTHER" id="PTHR30294:SF47">
    <property type="entry name" value="INNER MEMBRANE TRANSPORT PERMEASE YHHJ"/>
    <property type="match status" value="1"/>
</dbReference>
<dbReference type="PANTHER" id="PTHR30294">
    <property type="entry name" value="MEMBRANE COMPONENT OF ABC TRANSPORTER YHHJ-RELATED"/>
    <property type="match status" value="1"/>
</dbReference>
<dbReference type="Pfam" id="PF12698">
    <property type="entry name" value="ABC2_membrane_3"/>
    <property type="match status" value="1"/>
</dbReference>
<dbReference type="PROSITE" id="PS51012">
    <property type="entry name" value="ABC_TM2"/>
    <property type="match status" value="1"/>
</dbReference>
<name>YHHJ_ECOLI</name>
<gene>
    <name type="primary">yhhJ</name>
    <name type="ordered locus">b3485</name>
    <name type="ordered locus">JW5677</name>
</gene>
<protein>
    <recommendedName>
        <fullName>Inner membrane transport permease YhhJ</fullName>
    </recommendedName>
</protein>
<feature type="chain" id="PRO_0000183008" description="Inner membrane transport permease YhhJ">
    <location>
        <begin position="1"/>
        <end position="374"/>
    </location>
</feature>
<feature type="topological domain" description="Cytoplasmic" evidence="1">
    <location>
        <begin position="1"/>
        <end position="22"/>
    </location>
</feature>
<feature type="transmembrane region" description="Helical" evidence="1">
    <location>
        <begin position="23"/>
        <end position="43"/>
    </location>
</feature>
<feature type="topological domain" description="Periplasmic" evidence="1">
    <location>
        <begin position="44"/>
        <end position="172"/>
    </location>
</feature>
<feature type="transmembrane region" description="Helical" evidence="1">
    <location>
        <begin position="173"/>
        <end position="193"/>
    </location>
</feature>
<feature type="topological domain" description="Cytoplasmic" evidence="1">
    <location>
        <begin position="194"/>
        <end position="229"/>
    </location>
</feature>
<feature type="transmembrane region" description="Helical" evidence="1">
    <location>
        <begin position="230"/>
        <end position="250"/>
    </location>
</feature>
<feature type="topological domain" description="Periplasmic" evidence="1">
    <location>
        <begin position="251"/>
        <end position="255"/>
    </location>
</feature>
<feature type="transmembrane region" description="Helical" evidence="1">
    <location>
        <begin position="256"/>
        <end position="276"/>
    </location>
</feature>
<feature type="topological domain" description="Cytoplasmic" evidence="1">
    <location>
        <begin position="277"/>
        <end position="283"/>
    </location>
</feature>
<feature type="transmembrane region" description="Helical" evidence="1">
    <location>
        <begin position="284"/>
        <end position="304"/>
    </location>
</feature>
<feature type="topological domain" description="Periplasmic" evidence="1">
    <location>
        <begin position="305"/>
        <end position="342"/>
    </location>
</feature>
<feature type="transmembrane region" description="Helical" evidence="1">
    <location>
        <begin position="343"/>
        <end position="363"/>
    </location>
</feature>
<feature type="topological domain" description="Cytoplasmic" evidence="1">
    <location>
        <begin position="364"/>
        <end position="374"/>
    </location>
</feature>
<feature type="domain" description="ABC transmembrane type-2" evidence="2">
    <location>
        <begin position="133"/>
        <end position="369"/>
    </location>
</feature>
<evidence type="ECO:0000255" key="1"/>
<evidence type="ECO:0000255" key="2">
    <source>
        <dbReference type="PROSITE-ProRule" id="PRU00442"/>
    </source>
</evidence>
<evidence type="ECO:0000305" key="3"/>
<organism>
    <name type="scientific">Escherichia coli (strain K12)</name>
    <dbReference type="NCBI Taxonomy" id="83333"/>
    <lineage>
        <taxon>Bacteria</taxon>
        <taxon>Pseudomonadati</taxon>
        <taxon>Pseudomonadota</taxon>
        <taxon>Gammaproteobacteria</taxon>
        <taxon>Enterobacterales</taxon>
        <taxon>Enterobacteriaceae</taxon>
        <taxon>Escherichia</taxon>
    </lineage>
</organism>
<keyword id="KW-0997">Cell inner membrane</keyword>
<keyword id="KW-1003">Cell membrane</keyword>
<keyword id="KW-0472">Membrane</keyword>
<keyword id="KW-1185">Reference proteome</keyword>
<keyword id="KW-0812">Transmembrane</keyword>
<keyword id="KW-1133">Transmembrane helix</keyword>
<keyword id="KW-0813">Transport</keyword>
<sequence>MRHLRNIFNLGIKELRSLLGDKAMLTLIVFSFTVSVYSSATVTPGSLNLAPIAIADMDQSQLSNRIVNSFYRPWFLPPEMITADEMDAGLDAGRYTFAINIPPNFQRDVLAGRQPDIQVNVDATRMSQAFTGNGYIQNIINGEVNSFVARYRDNSEPLVSLETRMRFNPNLDPAWFGGVMAIINNITMLAIVLTGSALIREREHGTVEHLLVMPITPFEIMMAKIWSMGLVVLVVSGLSLVLMVKGVLGVPIEGSIPLFMLGVALSLFATTSIGIFMGTIARSMPQLGLLVILVLLPLQMLSGGSTPRESMPQMVQDIMLTMPTTHFVSLAQAILYRGAGFEIVWPQFLTLMAIGGAFFTIALLRFRKTIGTMA</sequence>
<proteinExistence type="evidence at protein level"/>
<comment type="subcellular location">
    <subcellularLocation>
        <location>Cell inner membrane</location>
        <topology>Multi-pass membrane protein</topology>
    </subcellularLocation>
</comment>
<comment type="similarity">
    <text evidence="3">Belongs to the ABC-2 integral membrane protein family.</text>
</comment>
<comment type="sequence caution" evidence="3">
    <conflict type="erroneous initiation">
        <sequence resource="EMBL-CDS" id="AAB18460"/>
    </conflict>
</comment>